<feature type="chain" id="PRO_0000249001" description="UBX domain-containing protein 1-B">
    <location>
        <begin position="1"/>
        <end position="290"/>
    </location>
</feature>
<feature type="domain" description="UBA" evidence="3">
    <location>
        <begin position="1"/>
        <end position="42"/>
    </location>
</feature>
<feature type="domain" description="UBX" evidence="4">
    <location>
        <begin position="208"/>
        <end position="287"/>
    </location>
</feature>
<feature type="region of interest" description="Disordered" evidence="5">
    <location>
        <begin position="49"/>
        <end position="210"/>
    </location>
</feature>
<feature type="coiled-coil region" evidence="2">
    <location>
        <begin position="81"/>
        <end position="171"/>
    </location>
</feature>
<feature type="compositionally biased region" description="Basic and acidic residues" evidence="5">
    <location>
        <begin position="80"/>
        <end position="117"/>
    </location>
</feature>
<feature type="compositionally biased region" description="Basic and acidic residues" evidence="5">
    <location>
        <begin position="132"/>
        <end position="172"/>
    </location>
</feature>
<feature type="compositionally biased region" description="Low complexity" evidence="5">
    <location>
        <begin position="185"/>
        <end position="201"/>
    </location>
</feature>
<evidence type="ECO:0000250" key="1"/>
<evidence type="ECO:0000255" key="2"/>
<evidence type="ECO:0000255" key="3">
    <source>
        <dbReference type="PROSITE-ProRule" id="PRU00212"/>
    </source>
</evidence>
<evidence type="ECO:0000255" key="4">
    <source>
        <dbReference type="PROSITE-ProRule" id="PRU00215"/>
    </source>
</evidence>
<evidence type="ECO:0000256" key="5">
    <source>
        <dbReference type="SAM" id="MobiDB-lite"/>
    </source>
</evidence>
<keyword id="KW-0175">Coiled coil</keyword>
<keyword id="KW-0963">Cytoplasm</keyword>
<keyword id="KW-1185">Reference proteome</keyword>
<gene>
    <name type="primary">ubxn1-b</name>
    <name type="synonym">saks1-b</name>
</gene>
<accession>Q6GLV4</accession>
<protein>
    <recommendedName>
        <fullName>UBX domain-containing protein 1-B</fullName>
    </recommendedName>
    <alternativeName>
        <fullName>SAPK substrate protein 1-B</fullName>
    </alternativeName>
</protein>
<dbReference type="EMBL" id="BC074345">
    <property type="protein sequence ID" value="AAH74345.1"/>
    <property type="molecule type" value="mRNA"/>
</dbReference>
<dbReference type="RefSeq" id="NP_001086224.1">
    <property type="nucleotide sequence ID" value="NM_001092755.1"/>
</dbReference>
<dbReference type="SMR" id="Q6GLV4"/>
<dbReference type="DNASU" id="444653"/>
<dbReference type="GeneID" id="444653"/>
<dbReference type="KEGG" id="xla:444653"/>
<dbReference type="AGR" id="Xenbase:XB-GENE-979863"/>
<dbReference type="CTD" id="444653"/>
<dbReference type="Xenbase" id="XB-GENE-979863">
    <property type="gene designation" value="ubxn1.L"/>
</dbReference>
<dbReference type="OrthoDB" id="10254930at2759"/>
<dbReference type="Proteomes" id="UP000186698">
    <property type="component" value="Chromosome 4L"/>
</dbReference>
<dbReference type="Bgee" id="444653">
    <property type="expression patterns" value="Expressed in brain and 19 other cell types or tissues"/>
</dbReference>
<dbReference type="GO" id="GO:0005737">
    <property type="term" value="C:cytoplasm"/>
    <property type="evidence" value="ECO:0000318"/>
    <property type="project" value="GO_Central"/>
</dbReference>
<dbReference type="GO" id="GO:0005634">
    <property type="term" value="C:nucleus"/>
    <property type="evidence" value="ECO:0000318"/>
    <property type="project" value="GO_Central"/>
</dbReference>
<dbReference type="GO" id="GO:0036435">
    <property type="term" value="F:K48-linked polyubiquitin modification-dependent protein binding"/>
    <property type="evidence" value="ECO:0000318"/>
    <property type="project" value="GO_Central"/>
</dbReference>
<dbReference type="GO" id="GO:0032435">
    <property type="term" value="P:negative regulation of proteasomal ubiquitin-dependent protein catabolic process"/>
    <property type="evidence" value="ECO:0000318"/>
    <property type="project" value="GO_Central"/>
</dbReference>
<dbReference type="GO" id="GO:1903094">
    <property type="term" value="P:negative regulation of protein K48-linked deubiquitination"/>
    <property type="evidence" value="ECO:0000318"/>
    <property type="project" value="GO_Central"/>
</dbReference>
<dbReference type="GO" id="GO:0031397">
    <property type="term" value="P:negative regulation of protein ubiquitination"/>
    <property type="evidence" value="ECO:0000318"/>
    <property type="project" value="GO_Central"/>
</dbReference>
<dbReference type="CDD" id="cd14302">
    <property type="entry name" value="UBA_UBXN1"/>
    <property type="match status" value="1"/>
</dbReference>
<dbReference type="CDD" id="cd01772">
    <property type="entry name" value="UBX_UBXN1"/>
    <property type="match status" value="1"/>
</dbReference>
<dbReference type="FunFam" id="1.10.8.10:FF:000044">
    <property type="entry name" value="UBX domain-containing protein 1"/>
    <property type="match status" value="1"/>
</dbReference>
<dbReference type="FunFam" id="3.10.20.90:FF:000134">
    <property type="entry name" value="UBX domain-containing protein 1"/>
    <property type="match status" value="1"/>
</dbReference>
<dbReference type="Gene3D" id="1.10.8.10">
    <property type="entry name" value="DNA helicase RuvA subunit, C-terminal domain"/>
    <property type="match status" value="1"/>
</dbReference>
<dbReference type="Gene3D" id="3.10.20.90">
    <property type="entry name" value="Phosphatidylinositol 3-kinase Catalytic Subunit, Chain A, domain 1"/>
    <property type="match status" value="1"/>
</dbReference>
<dbReference type="InterPro" id="IPR015940">
    <property type="entry name" value="UBA"/>
</dbReference>
<dbReference type="InterPro" id="IPR009060">
    <property type="entry name" value="UBA-like_sf"/>
</dbReference>
<dbReference type="InterPro" id="IPR041923">
    <property type="entry name" value="UBA_UBXN1"/>
</dbReference>
<dbReference type="InterPro" id="IPR029071">
    <property type="entry name" value="Ubiquitin-like_domsf"/>
</dbReference>
<dbReference type="InterPro" id="IPR001012">
    <property type="entry name" value="UBX_dom"/>
</dbReference>
<dbReference type="PANTHER" id="PTHR46340">
    <property type="entry name" value="UBX DOMAIN-CONTAINING PROTEIN 1"/>
    <property type="match status" value="1"/>
</dbReference>
<dbReference type="PANTHER" id="PTHR46340:SF1">
    <property type="entry name" value="UBX DOMAIN-CONTAINING PROTEIN 1"/>
    <property type="match status" value="1"/>
</dbReference>
<dbReference type="Pfam" id="PF22562">
    <property type="entry name" value="UBA_7"/>
    <property type="match status" value="1"/>
</dbReference>
<dbReference type="Pfam" id="PF00789">
    <property type="entry name" value="UBX"/>
    <property type="match status" value="1"/>
</dbReference>
<dbReference type="SMART" id="SM00165">
    <property type="entry name" value="UBA"/>
    <property type="match status" value="1"/>
</dbReference>
<dbReference type="SMART" id="SM00166">
    <property type="entry name" value="UBX"/>
    <property type="match status" value="1"/>
</dbReference>
<dbReference type="SUPFAM" id="SSF46934">
    <property type="entry name" value="UBA-like"/>
    <property type="match status" value="1"/>
</dbReference>
<dbReference type="SUPFAM" id="SSF54236">
    <property type="entry name" value="Ubiquitin-like"/>
    <property type="match status" value="1"/>
</dbReference>
<dbReference type="PROSITE" id="PS50030">
    <property type="entry name" value="UBA"/>
    <property type="match status" value="1"/>
</dbReference>
<dbReference type="PROSITE" id="PS50033">
    <property type="entry name" value="UBX"/>
    <property type="match status" value="1"/>
</dbReference>
<sequence length="290" mass="32920">MADCSALESLIEMGFSPSRAEKALSATGNQGIEPAMDWLVEHEDDPDIKEPSVVIPEDSGTDTTDTTDTQAMDTSAERLPLTEEEKEKQTKRMMELIAQKQKEREEREKRERIEQEKQRRKHGQELSAIKQRMQEQEMQKAAEDRRREKQEERLARERVREKIARDKADRARKFGGAGSEPISPPAETSVPATAPSPSSPVQEPPTKKEYDQCRIQVRLLDGSALSQTFRAREQLAAVRLYVELNWPGGPPEPFSLLTSFPRRVFTEEDMEKPLQELGLVPTAVLIVAKK</sequence>
<comment type="function">
    <text evidence="1">Component of a complex required to couple deglycosylation and proteasome-mediated degradation of misfolded proteins in the endoplasmic reticulum that are retrotranslocated in the cytosol. Involved in ubiquitin-proteasome systems (By similarity).</text>
</comment>
<comment type="subcellular location">
    <subcellularLocation>
        <location evidence="1">Cytoplasm</location>
    </subcellularLocation>
</comment>
<organism>
    <name type="scientific">Xenopus laevis</name>
    <name type="common">African clawed frog</name>
    <dbReference type="NCBI Taxonomy" id="8355"/>
    <lineage>
        <taxon>Eukaryota</taxon>
        <taxon>Metazoa</taxon>
        <taxon>Chordata</taxon>
        <taxon>Craniata</taxon>
        <taxon>Vertebrata</taxon>
        <taxon>Euteleostomi</taxon>
        <taxon>Amphibia</taxon>
        <taxon>Batrachia</taxon>
        <taxon>Anura</taxon>
        <taxon>Pipoidea</taxon>
        <taxon>Pipidae</taxon>
        <taxon>Xenopodinae</taxon>
        <taxon>Xenopus</taxon>
        <taxon>Xenopus</taxon>
    </lineage>
</organism>
<proteinExistence type="evidence at transcript level"/>
<name>UBX1B_XENLA</name>
<reference key="1">
    <citation type="submission" date="2004-06" db="EMBL/GenBank/DDBJ databases">
        <authorList>
            <consortium name="NIH - Xenopus Gene Collection (XGC) project"/>
        </authorList>
    </citation>
    <scope>NUCLEOTIDE SEQUENCE [LARGE SCALE MRNA]</scope>
    <source>
        <tissue>Brain</tissue>
    </source>
</reference>